<feature type="chain" id="PRO_1000017565" description="Large ribosomal subunit protein bL27">
    <location>
        <begin position="1"/>
        <end position="91"/>
    </location>
</feature>
<dbReference type="EMBL" id="CP000075">
    <property type="protein sequence ID" value="AAY35770.1"/>
    <property type="molecule type" value="Genomic_DNA"/>
</dbReference>
<dbReference type="RefSeq" id="WP_002551972.1">
    <property type="nucleotide sequence ID" value="NC_007005.1"/>
</dbReference>
<dbReference type="RefSeq" id="YP_233808.1">
    <property type="nucleotide sequence ID" value="NC_007005.1"/>
</dbReference>
<dbReference type="SMR" id="Q4ZYK2"/>
<dbReference type="STRING" id="205918.Psyr_0702"/>
<dbReference type="GeneID" id="96217044"/>
<dbReference type="KEGG" id="psb:Psyr_0702"/>
<dbReference type="PATRIC" id="fig|205918.7.peg.727"/>
<dbReference type="eggNOG" id="COG0211">
    <property type="taxonomic scope" value="Bacteria"/>
</dbReference>
<dbReference type="HOGENOM" id="CLU_095424_4_1_6"/>
<dbReference type="OrthoDB" id="9803474at2"/>
<dbReference type="Proteomes" id="UP000000426">
    <property type="component" value="Chromosome"/>
</dbReference>
<dbReference type="GO" id="GO:0022625">
    <property type="term" value="C:cytosolic large ribosomal subunit"/>
    <property type="evidence" value="ECO:0007669"/>
    <property type="project" value="TreeGrafter"/>
</dbReference>
<dbReference type="GO" id="GO:0003735">
    <property type="term" value="F:structural constituent of ribosome"/>
    <property type="evidence" value="ECO:0007669"/>
    <property type="project" value="InterPro"/>
</dbReference>
<dbReference type="GO" id="GO:0006412">
    <property type="term" value="P:translation"/>
    <property type="evidence" value="ECO:0007669"/>
    <property type="project" value="UniProtKB-UniRule"/>
</dbReference>
<dbReference type="FunFam" id="2.40.50.100:FF:000001">
    <property type="entry name" value="50S ribosomal protein L27"/>
    <property type="match status" value="1"/>
</dbReference>
<dbReference type="Gene3D" id="2.40.50.100">
    <property type="match status" value="1"/>
</dbReference>
<dbReference type="HAMAP" id="MF_00539">
    <property type="entry name" value="Ribosomal_bL27"/>
    <property type="match status" value="1"/>
</dbReference>
<dbReference type="InterPro" id="IPR001684">
    <property type="entry name" value="Ribosomal_bL27"/>
</dbReference>
<dbReference type="InterPro" id="IPR018261">
    <property type="entry name" value="Ribosomal_bL27_CS"/>
</dbReference>
<dbReference type="NCBIfam" id="TIGR00062">
    <property type="entry name" value="L27"/>
    <property type="match status" value="1"/>
</dbReference>
<dbReference type="PANTHER" id="PTHR15893:SF0">
    <property type="entry name" value="LARGE RIBOSOMAL SUBUNIT PROTEIN BL27M"/>
    <property type="match status" value="1"/>
</dbReference>
<dbReference type="PANTHER" id="PTHR15893">
    <property type="entry name" value="RIBOSOMAL PROTEIN L27"/>
    <property type="match status" value="1"/>
</dbReference>
<dbReference type="Pfam" id="PF01016">
    <property type="entry name" value="Ribosomal_L27"/>
    <property type="match status" value="1"/>
</dbReference>
<dbReference type="PRINTS" id="PR00063">
    <property type="entry name" value="RIBOSOMALL27"/>
</dbReference>
<dbReference type="SUPFAM" id="SSF110324">
    <property type="entry name" value="Ribosomal L27 protein-like"/>
    <property type="match status" value="1"/>
</dbReference>
<dbReference type="PROSITE" id="PS00831">
    <property type="entry name" value="RIBOSOMAL_L27"/>
    <property type="match status" value="1"/>
</dbReference>
<organism>
    <name type="scientific">Pseudomonas syringae pv. syringae (strain B728a)</name>
    <dbReference type="NCBI Taxonomy" id="205918"/>
    <lineage>
        <taxon>Bacteria</taxon>
        <taxon>Pseudomonadati</taxon>
        <taxon>Pseudomonadota</taxon>
        <taxon>Gammaproteobacteria</taxon>
        <taxon>Pseudomonadales</taxon>
        <taxon>Pseudomonadaceae</taxon>
        <taxon>Pseudomonas</taxon>
        <taxon>Pseudomonas syringae</taxon>
    </lineage>
</organism>
<reference key="1">
    <citation type="journal article" date="2005" name="Proc. Natl. Acad. Sci. U.S.A.">
        <title>Comparison of the complete genome sequences of Pseudomonas syringae pv. syringae B728a and pv. tomato DC3000.</title>
        <authorList>
            <person name="Feil H."/>
            <person name="Feil W.S."/>
            <person name="Chain P."/>
            <person name="Larimer F."/>
            <person name="Dibartolo G."/>
            <person name="Copeland A."/>
            <person name="Lykidis A."/>
            <person name="Trong S."/>
            <person name="Nolan M."/>
            <person name="Goltsman E."/>
            <person name="Thiel J."/>
            <person name="Malfatti S."/>
            <person name="Loper J.E."/>
            <person name="Lapidus A."/>
            <person name="Detter J.C."/>
            <person name="Land M."/>
            <person name="Richardson P.M."/>
            <person name="Kyrpides N.C."/>
            <person name="Ivanova N."/>
            <person name="Lindow S.E."/>
        </authorList>
    </citation>
    <scope>NUCLEOTIDE SEQUENCE [LARGE SCALE GENOMIC DNA]</scope>
    <source>
        <strain>B728a</strain>
    </source>
</reference>
<sequence length="91" mass="9746">MAHKKAGGSTRNGRDSEAKRLGVKMYGGQAIIPGNIIVRQRGTQFHAGYGVGMGKDHTLFAKVEGVIKFQVKGAFGRRYVSIVPKTEVSAA</sequence>
<keyword id="KW-0687">Ribonucleoprotein</keyword>
<keyword id="KW-0689">Ribosomal protein</keyword>
<accession>Q4ZYK2</accession>
<comment type="similarity">
    <text evidence="1">Belongs to the bacterial ribosomal protein bL27 family.</text>
</comment>
<proteinExistence type="inferred from homology"/>
<gene>
    <name evidence="1" type="primary">rpmA</name>
    <name type="ordered locus">Psyr_0702</name>
</gene>
<name>RL27_PSEU2</name>
<evidence type="ECO:0000255" key="1">
    <source>
        <dbReference type="HAMAP-Rule" id="MF_00539"/>
    </source>
</evidence>
<evidence type="ECO:0000305" key="2"/>
<protein>
    <recommendedName>
        <fullName evidence="1">Large ribosomal subunit protein bL27</fullName>
    </recommendedName>
    <alternativeName>
        <fullName evidence="2">50S ribosomal protein L27</fullName>
    </alternativeName>
</protein>